<evidence type="ECO:0000250" key="1"/>
<evidence type="ECO:0000250" key="2">
    <source>
        <dbReference type="UniProtKB" id="Q8IX15"/>
    </source>
</evidence>
<evidence type="ECO:0000255" key="3"/>
<evidence type="ECO:0000255" key="4">
    <source>
        <dbReference type="PROSITE-ProRule" id="PRU00108"/>
    </source>
</evidence>
<evidence type="ECO:0000256" key="5">
    <source>
        <dbReference type="SAM" id="MobiDB-lite"/>
    </source>
</evidence>
<evidence type="ECO:0000303" key="6">
    <source>
    </source>
</evidence>
<evidence type="ECO:0000305" key="7"/>
<proteinExistence type="evidence at transcript level"/>
<gene>
    <name type="primary">Homez</name>
</gene>
<feature type="chain" id="PRO_0000049137" description="Homeobox and leucine zipper protein Homez">
    <location>
        <begin position="1"/>
        <end position="513"/>
    </location>
</feature>
<feature type="DNA-binding region" description="Homeobox 1" evidence="4">
    <location>
        <begin position="31"/>
        <end position="90"/>
    </location>
</feature>
<feature type="DNA-binding region" description="Homeobox 2" evidence="4">
    <location>
        <begin position="324"/>
        <end position="384"/>
    </location>
</feature>
<feature type="DNA-binding region" description="Homeobox 3" evidence="4">
    <location>
        <begin position="418"/>
        <end position="477"/>
    </location>
</feature>
<feature type="region of interest" description="Disordered" evidence="5">
    <location>
        <begin position="200"/>
        <end position="221"/>
    </location>
</feature>
<feature type="region of interest" description="Disordered" evidence="5">
    <location>
        <begin position="241"/>
        <end position="287"/>
    </location>
</feature>
<feature type="region of interest" description="Disordered" evidence="5">
    <location>
        <begin position="303"/>
        <end position="328"/>
    </location>
</feature>
<feature type="region of interest" description="Disordered" evidence="5">
    <location>
        <begin position="402"/>
        <end position="429"/>
    </location>
</feature>
<feature type="region of interest" description="Disordered" evidence="5">
    <location>
        <begin position="480"/>
        <end position="513"/>
    </location>
</feature>
<feature type="short sequence motif" description="Nuclear localization signal" evidence="3">
    <location>
        <begin position="327"/>
        <end position="332"/>
    </location>
</feature>
<feature type="compositionally biased region" description="Gly residues" evidence="5">
    <location>
        <begin position="205"/>
        <end position="217"/>
    </location>
</feature>
<feature type="compositionally biased region" description="Low complexity" evidence="5">
    <location>
        <begin position="248"/>
        <end position="260"/>
    </location>
</feature>
<feature type="compositionally biased region" description="Pro residues" evidence="5">
    <location>
        <begin position="419"/>
        <end position="429"/>
    </location>
</feature>
<feature type="modified residue" description="Phosphoserine" evidence="2">
    <location>
        <position position="320"/>
    </location>
</feature>
<feature type="modified residue" description="Phosphothreonine" evidence="2">
    <location>
        <position position="418"/>
    </location>
</feature>
<feature type="cross-link" description="Glycyl lysine isopeptide (Lys-Gly) (interchain with G-Cter in SUMO2)" evidence="2">
    <location>
        <position position="156"/>
    </location>
</feature>
<feature type="cross-link" description="Glycyl lysine isopeptide (Lys-Gly) (interchain with G-Cter in SUMO2)" evidence="2">
    <location>
        <position position="174"/>
    </location>
</feature>
<feature type="cross-link" description="Glycyl lysine isopeptide (Lys-Gly) (interchain with G-Cter in SUMO2)" evidence="2">
    <location>
        <position position="176"/>
    </location>
</feature>
<feature type="splice variant" id="VSP_009134" description="In isoform 2." evidence="6">
    <original>EEEEEEEEEEDDDVIIRD</original>
    <variation>SVLWTEGPWSSN</variation>
    <location>
        <begin position="496"/>
        <end position="513"/>
    </location>
</feature>
<reference key="1">
    <citation type="journal article" date="2003" name="Proc. Natl. Acad. Sci. U.S.A.">
        <title>Homez, a homeobox leucine zipper gene specific to the vertebrate lineage.</title>
        <authorList>
            <person name="Bayarsaihan D."/>
            <person name="Enkhmandakh B."/>
            <person name="Makeyev A."/>
            <person name="Greally J.M."/>
            <person name="Leckman J.F."/>
            <person name="Ruddle F.H."/>
        </authorList>
    </citation>
    <scope>NUCLEOTIDE SEQUENCE [MRNA] (ISOFORMS 1 AND 2)</scope>
</reference>
<dbReference type="EMBL" id="AY126016">
    <property type="protein sequence ID" value="AAM94347.1"/>
    <property type="molecule type" value="mRNA"/>
</dbReference>
<dbReference type="RefSeq" id="XP_008768885.2">
    <molecule id="Q8K3E9-2"/>
    <property type="nucleotide sequence ID" value="XM_008770663.4"/>
</dbReference>
<dbReference type="BMRB" id="Q8K3E9"/>
<dbReference type="SMR" id="Q8K3E9"/>
<dbReference type="FunCoup" id="Q8K3E9">
    <property type="interactions" value="397"/>
</dbReference>
<dbReference type="STRING" id="10116.ENSRNOP00000019979"/>
<dbReference type="GlyGen" id="Q8K3E9">
    <property type="glycosylation" value="1 site"/>
</dbReference>
<dbReference type="iPTMnet" id="Q8K3E9"/>
<dbReference type="PhosphoSitePlus" id="Q8K3E9"/>
<dbReference type="PaxDb" id="10116-ENSRNOP00000019979"/>
<dbReference type="Ensembl" id="ENSRNOT00000019979.5">
    <molecule id="Q8K3E9-2"/>
    <property type="protein sequence ID" value="ENSRNOP00000019979.5"/>
    <property type="gene ID" value="ENSRNOG00000014887.5"/>
</dbReference>
<dbReference type="Ensembl" id="ENSRNOT00000097673.1">
    <molecule id="Q8K3E9-1"/>
    <property type="protein sequence ID" value="ENSRNOP00000087732.1"/>
    <property type="gene ID" value="ENSRNOG00000014887.5"/>
</dbReference>
<dbReference type="Ensembl" id="ENSRNOT00000118629.1">
    <molecule id="Q8K3E9-1"/>
    <property type="protein sequence ID" value="ENSRNOP00000082728.1"/>
    <property type="gene ID" value="ENSRNOG00000014887.5"/>
</dbReference>
<dbReference type="GeneID" id="260325"/>
<dbReference type="UCSC" id="RGD:628904">
    <molecule id="Q8K3E9-1"/>
    <property type="organism name" value="rat"/>
</dbReference>
<dbReference type="AGR" id="RGD:628904"/>
<dbReference type="CTD" id="57594"/>
<dbReference type="RGD" id="628904">
    <property type="gene designation" value="Homez"/>
</dbReference>
<dbReference type="eggNOG" id="KOG3986">
    <property type="taxonomic scope" value="Eukaryota"/>
</dbReference>
<dbReference type="GeneTree" id="ENSGT00950000182893"/>
<dbReference type="InParanoid" id="Q8K3E9"/>
<dbReference type="PRO" id="PR:Q8K3E9"/>
<dbReference type="Proteomes" id="UP000002494">
    <property type="component" value="Chromosome 15"/>
</dbReference>
<dbReference type="GO" id="GO:0005634">
    <property type="term" value="C:nucleus"/>
    <property type="evidence" value="ECO:0000266"/>
    <property type="project" value="RGD"/>
</dbReference>
<dbReference type="GO" id="GO:0003677">
    <property type="term" value="F:DNA binding"/>
    <property type="evidence" value="ECO:0000266"/>
    <property type="project" value="RGD"/>
</dbReference>
<dbReference type="GO" id="GO:0000981">
    <property type="term" value="F:DNA-binding transcription factor activity, RNA polymerase II-specific"/>
    <property type="evidence" value="ECO:0000318"/>
    <property type="project" value="GO_Central"/>
</dbReference>
<dbReference type="GO" id="GO:0006357">
    <property type="term" value="P:regulation of transcription by RNA polymerase II"/>
    <property type="evidence" value="ECO:0000318"/>
    <property type="project" value="GO_Central"/>
</dbReference>
<dbReference type="CDD" id="cd00086">
    <property type="entry name" value="homeodomain"/>
    <property type="match status" value="2"/>
</dbReference>
<dbReference type="FunFam" id="1.10.10.60:FF:000172">
    <property type="entry name" value="Homeobox and leucine zipper protein Homez"/>
    <property type="match status" value="1"/>
</dbReference>
<dbReference type="FunFam" id="1.10.10.60:FF:000211">
    <property type="entry name" value="Homeobox and leucine zipper protein Homez"/>
    <property type="match status" value="1"/>
</dbReference>
<dbReference type="Gene3D" id="1.10.10.60">
    <property type="entry name" value="Homeodomain-like"/>
    <property type="match status" value="3"/>
</dbReference>
<dbReference type="InterPro" id="IPR001356">
    <property type="entry name" value="HD"/>
</dbReference>
<dbReference type="InterPro" id="IPR009057">
    <property type="entry name" value="Homeodomain-like_sf"/>
</dbReference>
<dbReference type="InterPro" id="IPR024578">
    <property type="entry name" value="Homez_homeobox_dom"/>
</dbReference>
<dbReference type="PANTHER" id="PTHR15467:SF7">
    <property type="entry name" value="HOMEOBOX AND LEUCINE ZIPPER PROTEIN HOMEZ"/>
    <property type="match status" value="1"/>
</dbReference>
<dbReference type="PANTHER" id="PTHR15467">
    <property type="entry name" value="ZINC-FINGERS AND HOMEOBOXES RELATED"/>
    <property type="match status" value="1"/>
</dbReference>
<dbReference type="Pfam" id="PF11569">
    <property type="entry name" value="Homez"/>
    <property type="match status" value="1"/>
</dbReference>
<dbReference type="SMART" id="SM00389">
    <property type="entry name" value="HOX"/>
    <property type="match status" value="2"/>
</dbReference>
<dbReference type="SUPFAM" id="SSF46689">
    <property type="entry name" value="Homeodomain-like"/>
    <property type="match status" value="2"/>
</dbReference>
<dbReference type="PROSITE" id="PS50071">
    <property type="entry name" value="HOMEOBOX_2"/>
    <property type="match status" value="1"/>
</dbReference>
<sequence length="513" mass="57677">MSPNKDSSSLNSSGAGLVCLPPVSEELQLVWTQAVQTSELDGNEHLLQAFSYFPYPSLADIALLCLRHGLQMEKVKTWFMAQRLRCGISWSSEEIEETRARVVYHRDQLLFKSLLSFTHHAVRPPQEMPPVTPPEQVALGLRPLALSEPTQMKGLKVEPEEPFQVSQLPLNHQKVKEPLMMGSRTLNHQSDCQDLQISGLSKEQAGGGPDQSCGGGTASWNHSIAVHQPDKSPLISLLDNSCKEESEPSGTPPSSSASSPFQVLANGTTATPKPLQPLGYIPQSFSPSEQALSPQVEPLWSQRLRNNSVPSRVGPTEYLSPDMQHQRKTKRKTKEQLAILKSFFLQCQWARREDYHKLEQITGLPRPEIIQWFGDTRYALKHGQLKWFRDNAVLGTPSFQDPAISTSSTRSLKEWAKTPPLPAPPPPPDIRPLERYWAAHQQLQEADILKLSQASRLSTQQVLDWFDSRLPKPAEVVVCLDEEEEEEDEELPEDGEEEEEEEEEEDDDVIIRD</sequence>
<accession>Q8K3E9</accession>
<comment type="function">
    <text>May function as a transcriptional regulator.</text>
</comment>
<comment type="subunit">
    <text evidence="1 7">Homodimer or heterodimer (Potential). Interacts with HOXC8 (By similarity).</text>
</comment>
<comment type="subcellular location">
    <subcellularLocation>
        <location evidence="4">Nucleus</location>
    </subcellularLocation>
</comment>
<comment type="alternative products">
    <event type="alternative splicing"/>
    <isoform>
        <id>Q8K3E9-1</id>
        <name>1</name>
        <sequence type="displayed"/>
    </isoform>
    <isoform>
        <id>Q8K3E9-2</id>
        <name>2</name>
        <sequence type="described" ref="VSP_009134"/>
    </isoform>
</comment>
<comment type="miscellaneous">
    <molecule>Isoform 2</molecule>
    <text evidence="7">May result from the retention of an intron.</text>
</comment>
<protein>
    <recommendedName>
        <fullName>Homeobox and leucine zipper protein Homez</fullName>
    </recommendedName>
    <alternativeName>
        <fullName>Homeodomain leucine zipper-containing factor</fullName>
    </alternativeName>
</protein>
<keyword id="KW-0025">Alternative splicing</keyword>
<keyword id="KW-0238">DNA-binding</keyword>
<keyword id="KW-0371">Homeobox</keyword>
<keyword id="KW-1017">Isopeptide bond</keyword>
<keyword id="KW-0539">Nucleus</keyword>
<keyword id="KW-0597">Phosphoprotein</keyword>
<keyword id="KW-1185">Reference proteome</keyword>
<keyword id="KW-0677">Repeat</keyword>
<keyword id="KW-0804">Transcription</keyword>
<keyword id="KW-0805">Transcription regulation</keyword>
<keyword id="KW-0832">Ubl conjugation</keyword>
<organism>
    <name type="scientific">Rattus norvegicus</name>
    <name type="common">Rat</name>
    <dbReference type="NCBI Taxonomy" id="10116"/>
    <lineage>
        <taxon>Eukaryota</taxon>
        <taxon>Metazoa</taxon>
        <taxon>Chordata</taxon>
        <taxon>Craniata</taxon>
        <taxon>Vertebrata</taxon>
        <taxon>Euteleostomi</taxon>
        <taxon>Mammalia</taxon>
        <taxon>Eutheria</taxon>
        <taxon>Euarchontoglires</taxon>
        <taxon>Glires</taxon>
        <taxon>Rodentia</taxon>
        <taxon>Myomorpha</taxon>
        <taxon>Muroidea</taxon>
        <taxon>Muridae</taxon>
        <taxon>Murinae</taxon>
        <taxon>Rattus</taxon>
    </lineage>
</organism>
<name>HOMEZ_RAT</name>